<name>ACDH3_MYCVP</name>
<organism>
    <name type="scientific">Mycolicibacterium vanbaalenii (strain DSM 7251 / JCM 13017 / BCRC 16820 / KCTC 9966 / NRRL B-24157 / PYR-1)</name>
    <name type="common">Mycobacterium vanbaalenii</name>
    <dbReference type="NCBI Taxonomy" id="350058"/>
    <lineage>
        <taxon>Bacteria</taxon>
        <taxon>Bacillati</taxon>
        <taxon>Actinomycetota</taxon>
        <taxon>Actinomycetes</taxon>
        <taxon>Mycobacteriales</taxon>
        <taxon>Mycobacteriaceae</taxon>
        <taxon>Mycolicibacterium</taxon>
    </lineage>
</organism>
<evidence type="ECO:0000255" key="1">
    <source>
        <dbReference type="HAMAP-Rule" id="MF_01657"/>
    </source>
</evidence>
<sequence length="306" mass="32183">MADKKSVAIVGSGNISTDLLYKLLRSEWLEPRWMIGIDPESEGLARARKLGLETSHEGVDWLLAQSELPDMVFEATSAYVHKAAAPRYAEAGIRAIDLTPAAVGPGVIPPANLRAHLDAPNVNMVTCGGQATIPMVYAVSRVVEVPYAEIVASVSSASAGPGTRANIDEFTKTTSAGVQNIGGAQRGKAIIILNPAEPPMIMRDTIFCAIPEHADHAAITQSIKDVVAEVQTYVPGYRLLNEPQFDEPSVVNGGNHVVTVFVEVEGAGDYLPPYAGNLDIMTAAATKVGEEIAKESLAATAGGAQA</sequence>
<proteinExistence type="inferred from homology"/>
<gene>
    <name type="ordered locus">Mvan_5235</name>
</gene>
<comment type="catalytic activity">
    <reaction evidence="1">
        <text>acetaldehyde + NAD(+) + CoA = acetyl-CoA + NADH + H(+)</text>
        <dbReference type="Rhea" id="RHEA:23288"/>
        <dbReference type="ChEBI" id="CHEBI:15343"/>
        <dbReference type="ChEBI" id="CHEBI:15378"/>
        <dbReference type="ChEBI" id="CHEBI:57287"/>
        <dbReference type="ChEBI" id="CHEBI:57288"/>
        <dbReference type="ChEBI" id="CHEBI:57540"/>
        <dbReference type="ChEBI" id="CHEBI:57945"/>
        <dbReference type="EC" id="1.2.1.10"/>
    </reaction>
</comment>
<comment type="similarity">
    <text evidence="1">Belongs to the acetaldehyde dehydrogenase family.</text>
</comment>
<keyword id="KW-0058">Aromatic hydrocarbons catabolism</keyword>
<keyword id="KW-0520">NAD</keyword>
<keyword id="KW-0560">Oxidoreductase</keyword>
<reference key="1">
    <citation type="submission" date="2006-12" db="EMBL/GenBank/DDBJ databases">
        <title>Complete sequence of Mycobacterium vanbaalenii PYR-1.</title>
        <authorList>
            <consortium name="US DOE Joint Genome Institute"/>
            <person name="Copeland A."/>
            <person name="Lucas S."/>
            <person name="Lapidus A."/>
            <person name="Barry K."/>
            <person name="Detter J.C."/>
            <person name="Glavina del Rio T."/>
            <person name="Hammon N."/>
            <person name="Israni S."/>
            <person name="Dalin E."/>
            <person name="Tice H."/>
            <person name="Pitluck S."/>
            <person name="Singan V."/>
            <person name="Schmutz J."/>
            <person name="Larimer F."/>
            <person name="Land M."/>
            <person name="Hauser L."/>
            <person name="Kyrpides N."/>
            <person name="Anderson I.J."/>
            <person name="Miller C."/>
            <person name="Richardson P."/>
        </authorList>
    </citation>
    <scope>NUCLEOTIDE SEQUENCE [LARGE SCALE GENOMIC DNA]</scope>
    <source>
        <strain>DSM 7251 / JCM 13017 / BCRC 16820 / KCTC 9966 / NRRL B-24157 / PYR-1</strain>
    </source>
</reference>
<dbReference type="EC" id="1.2.1.10" evidence="1"/>
<dbReference type="EMBL" id="CP000511">
    <property type="protein sequence ID" value="ABM16006.1"/>
    <property type="molecule type" value="Genomic_DNA"/>
</dbReference>
<dbReference type="RefSeq" id="WP_011782376.1">
    <property type="nucleotide sequence ID" value="NZ_JACKSD010000239.1"/>
</dbReference>
<dbReference type="SMR" id="A1TFQ6"/>
<dbReference type="STRING" id="350058.Mvan_5235"/>
<dbReference type="KEGG" id="mva:Mvan_5235"/>
<dbReference type="eggNOG" id="COG4569">
    <property type="taxonomic scope" value="Bacteria"/>
</dbReference>
<dbReference type="HOGENOM" id="CLU_062208_0_0_11"/>
<dbReference type="Proteomes" id="UP000009159">
    <property type="component" value="Chromosome"/>
</dbReference>
<dbReference type="GO" id="GO:0008774">
    <property type="term" value="F:acetaldehyde dehydrogenase (acetylating) activity"/>
    <property type="evidence" value="ECO:0007669"/>
    <property type="project" value="UniProtKB-UniRule"/>
</dbReference>
<dbReference type="GO" id="GO:0051287">
    <property type="term" value="F:NAD binding"/>
    <property type="evidence" value="ECO:0007669"/>
    <property type="project" value="UniProtKB-UniRule"/>
</dbReference>
<dbReference type="GO" id="GO:0009056">
    <property type="term" value="P:catabolic process"/>
    <property type="evidence" value="ECO:0007669"/>
    <property type="project" value="UniProtKB-KW"/>
</dbReference>
<dbReference type="CDD" id="cd23933">
    <property type="entry name" value="ALDH_C"/>
    <property type="match status" value="1"/>
</dbReference>
<dbReference type="Gene3D" id="3.30.360.10">
    <property type="entry name" value="Dihydrodipicolinate Reductase, domain 2"/>
    <property type="match status" value="1"/>
</dbReference>
<dbReference type="Gene3D" id="3.40.50.720">
    <property type="entry name" value="NAD(P)-binding Rossmann-like Domain"/>
    <property type="match status" value="1"/>
</dbReference>
<dbReference type="HAMAP" id="MF_01657">
    <property type="entry name" value="Ac_ald_DH_ac"/>
    <property type="match status" value="1"/>
</dbReference>
<dbReference type="InterPro" id="IPR003361">
    <property type="entry name" value="Acetaldehyde_dehydrogenase"/>
</dbReference>
<dbReference type="InterPro" id="IPR015426">
    <property type="entry name" value="Acetylaldehyde_DH_C"/>
</dbReference>
<dbReference type="InterPro" id="IPR036291">
    <property type="entry name" value="NAD(P)-bd_dom_sf"/>
</dbReference>
<dbReference type="InterPro" id="IPR000534">
    <property type="entry name" value="Semialdehyde_DH_NAD-bd"/>
</dbReference>
<dbReference type="NCBIfam" id="TIGR03215">
    <property type="entry name" value="ac_ald_DH_ac"/>
    <property type="match status" value="1"/>
</dbReference>
<dbReference type="NCBIfam" id="NF006157">
    <property type="entry name" value="PRK08300.1"/>
    <property type="match status" value="1"/>
</dbReference>
<dbReference type="Pfam" id="PF09290">
    <property type="entry name" value="AcetDehyd-dimer"/>
    <property type="match status" value="1"/>
</dbReference>
<dbReference type="PIRSF" id="PIRSF015689">
    <property type="entry name" value="Actaldh_dh_actl"/>
    <property type="match status" value="1"/>
</dbReference>
<dbReference type="SMART" id="SM00859">
    <property type="entry name" value="Semialdhyde_dh"/>
    <property type="match status" value="1"/>
</dbReference>
<dbReference type="SUPFAM" id="SSF55347">
    <property type="entry name" value="Glyceraldehyde-3-phosphate dehydrogenase-like, C-terminal domain"/>
    <property type="match status" value="1"/>
</dbReference>
<dbReference type="SUPFAM" id="SSF51735">
    <property type="entry name" value="NAD(P)-binding Rossmann-fold domains"/>
    <property type="match status" value="1"/>
</dbReference>
<accession>A1TFQ6</accession>
<feature type="chain" id="PRO_0000387694" description="Acetaldehyde dehydrogenase 3">
    <location>
        <begin position="1"/>
        <end position="306"/>
    </location>
</feature>
<feature type="active site" description="Acyl-thioester intermediate" evidence="1">
    <location>
        <position position="127"/>
    </location>
</feature>
<feature type="binding site" evidence="1">
    <location>
        <begin position="12"/>
        <end position="15"/>
    </location>
    <ligand>
        <name>NAD(+)</name>
        <dbReference type="ChEBI" id="CHEBI:57540"/>
    </ligand>
</feature>
<feature type="binding site" evidence="1">
    <location>
        <begin position="158"/>
        <end position="166"/>
    </location>
    <ligand>
        <name>NAD(+)</name>
        <dbReference type="ChEBI" id="CHEBI:57540"/>
    </ligand>
</feature>
<feature type="binding site" evidence="1">
    <location>
        <position position="277"/>
    </location>
    <ligand>
        <name>NAD(+)</name>
        <dbReference type="ChEBI" id="CHEBI:57540"/>
    </ligand>
</feature>
<protein>
    <recommendedName>
        <fullName evidence="1">Acetaldehyde dehydrogenase 3</fullName>
        <ecNumber evidence="1">1.2.1.10</ecNumber>
    </recommendedName>
    <alternativeName>
        <fullName evidence="1">Acetaldehyde dehydrogenase [acetylating] 3</fullName>
    </alternativeName>
</protein>